<gene>
    <name type="primary">lpl11</name>
    <name type="ordered locus">MW0398</name>
</gene>
<accession>Q8NY38</accession>
<feature type="signal peptide" evidence="1">
    <location>
        <begin position="1"/>
        <end position="22"/>
    </location>
</feature>
<feature type="chain" id="PRO_0000282180" description="Uncharacterized lipoprotein MW0398">
    <location>
        <begin position="23"/>
        <end position="256"/>
    </location>
</feature>
<feature type="lipid moiety-binding region" description="N-palmitoyl cysteine" evidence="1">
    <location>
        <position position="23"/>
    </location>
</feature>
<feature type="lipid moiety-binding region" description="S-diacylglycerol cysteine" evidence="1">
    <location>
        <position position="23"/>
    </location>
</feature>
<organism>
    <name type="scientific">Staphylococcus aureus (strain MW2)</name>
    <dbReference type="NCBI Taxonomy" id="196620"/>
    <lineage>
        <taxon>Bacteria</taxon>
        <taxon>Bacillati</taxon>
        <taxon>Bacillota</taxon>
        <taxon>Bacilli</taxon>
        <taxon>Bacillales</taxon>
        <taxon>Staphylococcaceae</taxon>
        <taxon>Staphylococcus</taxon>
    </lineage>
</organism>
<sequence length="256" mass="29816">MGYLKRIGMCISLLIVIIFVTSCGGGNKITGDSKETQIKKSFAKTLDMYPIKNLEDLYDKEGYRDGEFKKGDKGMWTIYTDFAKSNKPGELDDEGMVLNLDRNTRTAKGYYFVKKFYEKDKLPDRKNYKVEMKNNKSILLDKVEDPNLKKRIENFKFFGQYANFKDLENYNNGDVSINWNVPSYDVEYKMSNKDENVKQLRSRYNIPTDKAPMLKMHIDGDLKGSSVGYKRLEIDFSKEDRDISVIDYLSYKPAKK</sequence>
<name>Y398_STAAW</name>
<proteinExistence type="inferred from homology"/>
<evidence type="ECO:0000255" key="1">
    <source>
        <dbReference type="PROSITE-ProRule" id="PRU00303"/>
    </source>
</evidence>
<evidence type="ECO:0000305" key="2"/>
<dbReference type="EMBL" id="BA000033">
    <property type="protein sequence ID" value="BAB94263.1"/>
    <property type="molecule type" value="Genomic_DNA"/>
</dbReference>
<dbReference type="SMR" id="Q8NY38"/>
<dbReference type="KEGG" id="sam:MW0398"/>
<dbReference type="HOGENOM" id="CLU_071589_0_1_9"/>
<dbReference type="GO" id="GO:0005886">
    <property type="term" value="C:plasma membrane"/>
    <property type="evidence" value="ECO:0007669"/>
    <property type="project" value="UniProtKB-SubCell"/>
</dbReference>
<dbReference type="Gene3D" id="2.50.20.40">
    <property type="match status" value="1"/>
</dbReference>
<dbReference type="InterPro" id="IPR007595">
    <property type="entry name" value="Csa"/>
</dbReference>
<dbReference type="InterPro" id="IPR038641">
    <property type="entry name" value="Csa_sf"/>
</dbReference>
<dbReference type="NCBIfam" id="TIGR01742">
    <property type="entry name" value="SA_tandem_lipo"/>
    <property type="match status" value="1"/>
</dbReference>
<dbReference type="Pfam" id="PF04507">
    <property type="entry name" value="DUF576"/>
    <property type="match status" value="1"/>
</dbReference>
<dbReference type="PROSITE" id="PS51257">
    <property type="entry name" value="PROKAR_LIPOPROTEIN"/>
    <property type="match status" value="1"/>
</dbReference>
<comment type="subcellular location">
    <subcellularLocation>
        <location evidence="1">Cell membrane</location>
        <topology evidence="1">Lipid-anchor</topology>
    </subcellularLocation>
</comment>
<comment type="similarity">
    <text evidence="2">Belongs to the staphylococcal tandem lipoprotein family.</text>
</comment>
<keyword id="KW-1003">Cell membrane</keyword>
<keyword id="KW-0449">Lipoprotein</keyword>
<keyword id="KW-0472">Membrane</keyword>
<keyword id="KW-0564">Palmitate</keyword>
<keyword id="KW-0732">Signal</keyword>
<protein>
    <recommendedName>
        <fullName>Uncharacterized lipoprotein MW0398</fullName>
    </recommendedName>
</protein>
<reference key="1">
    <citation type="journal article" date="2002" name="Lancet">
        <title>Genome and virulence determinants of high virulence community-acquired MRSA.</title>
        <authorList>
            <person name="Baba T."/>
            <person name="Takeuchi F."/>
            <person name="Kuroda M."/>
            <person name="Yuzawa H."/>
            <person name="Aoki K."/>
            <person name="Oguchi A."/>
            <person name="Nagai Y."/>
            <person name="Iwama N."/>
            <person name="Asano K."/>
            <person name="Naimi T."/>
            <person name="Kuroda H."/>
            <person name="Cui L."/>
            <person name="Yamamoto K."/>
            <person name="Hiramatsu K."/>
        </authorList>
    </citation>
    <scope>NUCLEOTIDE SEQUENCE [LARGE SCALE GENOMIC DNA]</scope>
    <source>
        <strain>MW2</strain>
    </source>
</reference>